<sequence>MFSSLYPLARASLFKMDAEDAHHLTLRMLGAAGRTGLARALSSRVPDAPRTVMGLTFRNPVGLAAGLDKDGAAIDGFAALGFGFIEVGTVTPRAQPGNPRPRMFRLPEAGAIINRMGFNNSGVDQFVKNVQAARYRGVLGLNIGKNADTPIERAADDYLYCLERVYPFASYVTINISSPNTKNLRQLQGAGELDALLAALKNKQQRLADLHGKLVPLALKIAPDLDDEQVKDIAATLLRHNIEGVIATNTTLSRDAVKGLPHADEAGGLSGRPVFDASNAVIRKLHAELGDAVPIIGVGGIFSGDDARAKLAAGASLVQLYTGFIYRGPALVAECVKAIARGQTR</sequence>
<organism>
    <name type="scientific">Burkholderia thailandensis (strain ATCC 700388 / DSM 13276 / CCUG 48851 / CIP 106301 / E264)</name>
    <dbReference type="NCBI Taxonomy" id="271848"/>
    <lineage>
        <taxon>Bacteria</taxon>
        <taxon>Pseudomonadati</taxon>
        <taxon>Pseudomonadota</taxon>
        <taxon>Betaproteobacteria</taxon>
        <taxon>Burkholderiales</taxon>
        <taxon>Burkholderiaceae</taxon>
        <taxon>Burkholderia</taxon>
        <taxon>pseudomallei group</taxon>
    </lineage>
</organism>
<protein>
    <recommendedName>
        <fullName evidence="1">Dihydroorotate dehydrogenase (quinone)</fullName>
        <ecNumber evidence="1">1.3.5.2</ecNumber>
    </recommendedName>
    <alternativeName>
        <fullName evidence="1">DHOdehase</fullName>
        <shortName evidence="1">DHOD</shortName>
        <shortName evidence="1">DHODase</shortName>
    </alternativeName>
    <alternativeName>
        <fullName evidence="1">Dihydroorotate oxidase</fullName>
    </alternativeName>
</protein>
<name>PYRD_BURTA</name>
<proteinExistence type="inferred from homology"/>
<reference key="1">
    <citation type="journal article" date="2005" name="BMC Genomics">
        <title>Bacterial genome adaptation to niches: divergence of the potential virulence genes in three Burkholderia species of different survival strategies.</title>
        <authorList>
            <person name="Kim H.S."/>
            <person name="Schell M.A."/>
            <person name="Yu Y."/>
            <person name="Ulrich R.L."/>
            <person name="Sarria S.H."/>
            <person name="Nierman W.C."/>
            <person name="DeShazer D."/>
        </authorList>
    </citation>
    <scope>NUCLEOTIDE SEQUENCE [LARGE SCALE GENOMIC DNA]</scope>
    <source>
        <strain>ATCC 700388 / DSM 13276 / CCUG 48851 / CIP 106301 / E264</strain>
    </source>
</reference>
<accession>Q2SVL9</accession>
<dbReference type="EC" id="1.3.5.2" evidence="1"/>
<dbReference type="EMBL" id="CP000086">
    <property type="protein sequence ID" value="ABC37940.1"/>
    <property type="molecule type" value="Genomic_DNA"/>
</dbReference>
<dbReference type="RefSeq" id="WP_009891396.1">
    <property type="nucleotide sequence ID" value="NC_007651.1"/>
</dbReference>
<dbReference type="SMR" id="Q2SVL9"/>
<dbReference type="GeneID" id="45122221"/>
<dbReference type="KEGG" id="bte:BTH_I2511"/>
<dbReference type="HOGENOM" id="CLU_013640_2_0_4"/>
<dbReference type="UniPathway" id="UPA00070">
    <property type="reaction ID" value="UER00946"/>
</dbReference>
<dbReference type="Proteomes" id="UP000001930">
    <property type="component" value="Chromosome I"/>
</dbReference>
<dbReference type="GO" id="GO:0005737">
    <property type="term" value="C:cytoplasm"/>
    <property type="evidence" value="ECO:0007669"/>
    <property type="project" value="InterPro"/>
</dbReference>
<dbReference type="GO" id="GO:0005886">
    <property type="term" value="C:plasma membrane"/>
    <property type="evidence" value="ECO:0007669"/>
    <property type="project" value="UniProtKB-SubCell"/>
</dbReference>
<dbReference type="GO" id="GO:0106430">
    <property type="term" value="F:dihydroorotate dehydrogenase (quinone) activity"/>
    <property type="evidence" value="ECO:0007669"/>
    <property type="project" value="UniProtKB-EC"/>
</dbReference>
<dbReference type="GO" id="GO:0006207">
    <property type="term" value="P:'de novo' pyrimidine nucleobase biosynthetic process"/>
    <property type="evidence" value="ECO:0007669"/>
    <property type="project" value="InterPro"/>
</dbReference>
<dbReference type="GO" id="GO:0044205">
    <property type="term" value="P:'de novo' UMP biosynthetic process"/>
    <property type="evidence" value="ECO:0007669"/>
    <property type="project" value="UniProtKB-UniRule"/>
</dbReference>
<dbReference type="CDD" id="cd04738">
    <property type="entry name" value="DHOD_2_like"/>
    <property type="match status" value="1"/>
</dbReference>
<dbReference type="FunFam" id="3.20.20.70:FF:000028">
    <property type="entry name" value="Dihydroorotate dehydrogenase (quinone)"/>
    <property type="match status" value="1"/>
</dbReference>
<dbReference type="Gene3D" id="3.20.20.70">
    <property type="entry name" value="Aldolase class I"/>
    <property type="match status" value="1"/>
</dbReference>
<dbReference type="HAMAP" id="MF_00225">
    <property type="entry name" value="DHO_dh_type2"/>
    <property type="match status" value="1"/>
</dbReference>
<dbReference type="InterPro" id="IPR013785">
    <property type="entry name" value="Aldolase_TIM"/>
</dbReference>
<dbReference type="InterPro" id="IPR050074">
    <property type="entry name" value="DHO_dehydrogenase"/>
</dbReference>
<dbReference type="InterPro" id="IPR012135">
    <property type="entry name" value="Dihydroorotate_DH_1_2"/>
</dbReference>
<dbReference type="InterPro" id="IPR005719">
    <property type="entry name" value="Dihydroorotate_DH_2"/>
</dbReference>
<dbReference type="InterPro" id="IPR005720">
    <property type="entry name" value="Dihydroorotate_DH_cat"/>
</dbReference>
<dbReference type="InterPro" id="IPR001295">
    <property type="entry name" value="Dihydroorotate_DH_CS"/>
</dbReference>
<dbReference type="NCBIfam" id="NF003644">
    <property type="entry name" value="PRK05286.1-1"/>
    <property type="match status" value="1"/>
</dbReference>
<dbReference type="NCBIfam" id="NF003645">
    <property type="entry name" value="PRK05286.1-2"/>
    <property type="match status" value="1"/>
</dbReference>
<dbReference type="NCBIfam" id="NF003646">
    <property type="entry name" value="PRK05286.1-4"/>
    <property type="match status" value="1"/>
</dbReference>
<dbReference type="NCBIfam" id="NF003652">
    <property type="entry name" value="PRK05286.2-5"/>
    <property type="match status" value="1"/>
</dbReference>
<dbReference type="NCBIfam" id="TIGR01036">
    <property type="entry name" value="pyrD_sub2"/>
    <property type="match status" value="1"/>
</dbReference>
<dbReference type="PANTHER" id="PTHR48109:SF4">
    <property type="entry name" value="DIHYDROOROTATE DEHYDROGENASE (QUINONE), MITOCHONDRIAL"/>
    <property type="match status" value="1"/>
</dbReference>
<dbReference type="PANTHER" id="PTHR48109">
    <property type="entry name" value="DIHYDROOROTATE DEHYDROGENASE (QUINONE), MITOCHONDRIAL-RELATED"/>
    <property type="match status" value="1"/>
</dbReference>
<dbReference type="Pfam" id="PF01180">
    <property type="entry name" value="DHO_dh"/>
    <property type="match status" value="1"/>
</dbReference>
<dbReference type="PIRSF" id="PIRSF000164">
    <property type="entry name" value="DHO_oxidase"/>
    <property type="match status" value="1"/>
</dbReference>
<dbReference type="SUPFAM" id="SSF51395">
    <property type="entry name" value="FMN-linked oxidoreductases"/>
    <property type="match status" value="1"/>
</dbReference>
<dbReference type="PROSITE" id="PS00911">
    <property type="entry name" value="DHODEHASE_1"/>
    <property type="match status" value="1"/>
</dbReference>
<dbReference type="PROSITE" id="PS00912">
    <property type="entry name" value="DHODEHASE_2"/>
    <property type="match status" value="1"/>
</dbReference>
<gene>
    <name evidence="1" type="primary">pyrD</name>
    <name type="ordered locus">BTH_I2511</name>
</gene>
<comment type="function">
    <text evidence="1">Catalyzes the conversion of dihydroorotate to orotate with quinone as electron acceptor.</text>
</comment>
<comment type="catalytic activity">
    <reaction evidence="1">
        <text>(S)-dihydroorotate + a quinone = orotate + a quinol</text>
        <dbReference type="Rhea" id="RHEA:30187"/>
        <dbReference type="ChEBI" id="CHEBI:24646"/>
        <dbReference type="ChEBI" id="CHEBI:30839"/>
        <dbReference type="ChEBI" id="CHEBI:30864"/>
        <dbReference type="ChEBI" id="CHEBI:132124"/>
        <dbReference type="EC" id="1.3.5.2"/>
    </reaction>
</comment>
<comment type="cofactor">
    <cofactor evidence="1">
        <name>FMN</name>
        <dbReference type="ChEBI" id="CHEBI:58210"/>
    </cofactor>
    <text evidence="1">Binds 1 FMN per subunit.</text>
</comment>
<comment type="pathway">
    <text evidence="1">Pyrimidine metabolism; UMP biosynthesis via de novo pathway; orotate from (S)-dihydroorotate (quinone route): step 1/1.</text>
</comment>
<comment type="subunit">
    <text evidence="1">Monomer.</text>
</comment>
<comment type="subcellular location">
    <subcellularLocation>
        <location evidence="1">Cell membrane</location>
        <topology evidence="1">Peripheral membrane protein</topology>
    </subcellularLocation>
</comment>
<comment type="similarity">
    <text evidence="1">Belongs to the dihydroorotate dehydrogenase family. Type 2 subfamily.</text>
</comment>
<evidence type="ECO:0000255" key="1">
    <source>
        <dbReference type="HAMAP-Rule" id="MF_00225"/>
    </source>
</evidence>
<keyword id="KW-1003">Cell membrane</keyword>
<keyword id="KW-0285">Flavoprotein</keyword>
<keyword id="KW-0288">FMN</keyword>
<keyword id="KW-0472">Membrane</keyword>
<keyword id="KW-0560">Oxidoreductase</keyword>
<keyword id="KW-0665">Pyrimidine biosynthesis</keyword>
<feature type="chain" id="PRO_1000024164" description="Dihydroorotate dehydrogenase (quinone)">
    <location>
        <begin position="1"/>
        <end position="345"/>
    </location>
</feature>
<feature type="active site" description="Nucleophile" evidence="1">
    <location>
        <position position="178"/>
    </location>
</feature>
<feature type="binding site" evidence="1">
    <location>
        <begin position="65"/>
        <end position="69"/>
    </location>
    <ligand>
        <name>FMN</name>
        <dbReference type="ChEBI" id="CHEBI:58210"/>
    </ligand>
</feature>
<feature type="binding site" evidence="1">
    <location>
        <position position="69"/>
    </location>
    <ligand>
        <name>substrate</name>
    </ligand>
</feature>
<feature type="binding site" evidence="1">
    <location>
        <position position="89"/>
    </location>
    <ligand>
        <name>FMN</name>
        <dbReference type="ChEBI" id="CHEBI:58210"/>
    </ligand>
</feature>
<feature type="binding site" evidence="1">
    <location>
        <begin position="114"/>
        <end position="118"/>
    </location>
    <ligand>
        <name>substrate</name>
    </ligand>
</feature>
<feature type="binding site" evidence="1">
    <location>
        <position position="142"/>
    </location>
    <ligand>
        <name>FMN</name>
        <dbReference type="ChEBI" id="CHEBI:58210"/>
    </ligand>
</feature>
<feature type="binding site" evidence="1">
    <location>
        <position position="175"/>
    </location>
    <ligand>
        <name>FMN</name>
        <dbReference type="ChEBI" id="CHEBI:58210"/>
    </ligand>
</feature>
<feature type="binding site" evidence="1">
    <location>
        <position position="175"/>
    </location>
    <ligand>
        <name>substrate</name>
    </ligand>
</feature>
<feature type="binding site" evidence="1">
    <location>
        <position position="180"/>
    </location>
    <ligand>
        <name>substrate</name>
    </ligand>
</feature>
<feature type="binding site" evidence="1">
    <location>
        <position position="220"/>
    </location>
    <ligand>
        <name>FMN</name>
        <dbReference type="ChEBI" id="CHEBI:58210"/>
    </ligand>
</feature>
<feature type="binding site" evidence="1">
    <location>
        <position position="248"/>
    </location>
    <ligand>
        <name>FMN</name>
        <dbReference type="ChEBI" id="CHEBI:58210"/>
    </ligand>
</feature>
<feature type="binding site" evidence="1">
    <location>
        <begin position="249"/>
        <end position="250"/>
    </location>
    <ligand>
        <name>substrate</name>
    </ligand>
</feature>
<feature type="binding site" evidence="1">
    <location>
        <position position="271"/>
    </location>
    <ligand>
        <name>FMN</name>
        <dbReference type="ChEBI" id="CHEBI:58210"/>
    </ligand>
</feature>
<feature type="binding site" evidence="1">
    <location>
        <position position="300"/>
    </location>
    <ligand>
        <name>FMN</name>
        <dbReference type="ChEBI" id="CHEBI:58210"/>
    </ligand>
</feature>
<feature type="binding site" evidence="1">
    <location>
        <begin position="321"/>
        <end position="322"/>
    </location>
    <ligand>
        <name>FMN</name>
        <dbReference type="ChEBI" id="CHEBI:58210"/>
    </ligand>
</feature>